<gene>
    <name evidence="1" type="primary">eno</name>
    <name type="ordered locus">BALH_4627</name>
</gene>
<accession>A0RKS3</accession>
<keyword id="KW-0963">Cytoplasm</keyword>
<keyword id="KW-0324">Glycolysis</keyword>
<keyword id="KW-0456">Lyase</keyword>
<keyword id="KW-0460">Magnesium</keyword>
<keyword id="KW-0479">Metal-binding</keyword>
<keyword id="KW-0964">Secreted</keyword>
<name>ENO_BACAH</name>
<reference key="1">
    <citation type="journal article" date="2007" name="J. Bacteriol.">
        <title>The complete genome sequence of Bacillus thuringiensis Al Hakam.</title>
        <authorList>
            <person name="Challacombe J.F."/>
            <person name="Altherr M.R."/>
            <person name="Xie G."/>
            <person name="Bhotika S.S."/>
            <person name="Brown N."/>
            <person name="Bruce D."/>
            <person name="Campbell C.S."/>
            <person name="Campbell M.L."/>
            <person name="Chen J."/>
            <person name="Chertkov O."/>
            <person name="Cleland C."/>
            <person name="Dimitrijevic M."/>
            <person name="Doggett N.A."/>
            <person name="Fawcett J.J."/>
            <person name="Glavina T."/>
            <person name="Goodwin L.A."/>
            <person name="Green L.D."/>
            <person name="Han C.S."/>
            <person name="Hill K.K."/>
            <person name="Hitchcock P."/>
            <person name="Jackson P.J."/>
            <person name="Keim P."/>
            <person name="Kewalramani A.R."/>
            <person name="Longmire J."/>
            <person name="Lucas S."/>
            <person name="Malfatti S."/>
            <person name="Martinez D."/>
            <person name="McMurry K."/>
            <person name="Meincke L.J."/>
            <person name="Misra M."/>
            <person name="Moseman B.L."/>
            <person name="Mundt M."/>
            <person name="Munk A.C."/>
            <person name="Okinaka R.T."/>
            <person name="Parson-Quintana B."/>
            <person name="Reilly L.P."/>
            <person name="Richardson P."/>
            <person name="Robinson D.L."/>
            <person name="Saunders E."/>
            <person name="Tapia R."/>
            <person name="Tesmer J.G."/>
            <person name="Thayer N."/>
            <person name="Thompson L.S."/>
            <person name="Tice H."/>
            <person name="Ticknor L.O."/>
            <person name="Wills P.L."/>
            <person name="Gilna P."/>
            <person name="Brettin T.S."/>
        </authorList>
    </citation>
    <scope>NUCLEOTIDE SEQUENCE [LARGE SCALE GENOMIC DNA]</scope>
    <source>
        <strain>Al Hakam</strain>
    </source>
</reference>
<comment type="function">
    <text evidence="1">Catalyzes the reversible conversion of 2-phosphoglycerate (2-PG) into phosphoenolpyruvate (PEP). It is essential for the degradation of carbohydrates via glycolysis.</text>
</comment>
<comment type="catalytic activity">
    <reaction evidence="1">
        <text>(2R)-2-phosphoglycerate = phosphoenolpyruvate + H2O</text>
        <dbReference type="Rhea" id="RHEA:10164"/>
        <dbReference type="ChEBI" id="CHEBI:15377"/>
        <dbReference type="ChEBI" id="CHEBI:58289"/>
        <dbReference type="ChEBI" id="CHEBI:58702"/>
        <dbReference type="EC" id="4.2.1.11"/>
    </reaction>
</comment>
<comment type="cofactor">
    <cofactor evidence="1">
        <name>Mg(2+)</name>
        <dbReference type="ChEBI" id="CHEBI:18420"/>
    </cofactor>
    <text evidence="1">Binds a second Mg(2+) ion via substrate during catalysis.</text>
</comment>
<comment type="pathway">
    <text evidence="1">Carbohydrate degradation; glycolysis; pyruvate from D-glyceraldehyde 3-phosphate: step 4/5.</text>
</comment>
<comment type="subcellular location">
    <subcellularLocation>
        <location evidence="1">Cytoplasm</location>
    </subcellularLocation>
    <subcellularLocation>
        <location evidence="1">Secreted</location>
    </subcellularLocation>
    <subcellularLocation>
        <location evidence="1">Cell surface</location>
    </subcellularLocation>
    <text evidence="1">Fractions of enolase are present in both the cytoplasm and on the cell surface.</text>
</comment>
<comment type="similarity">
    <text evidence="1">Belongs to the enolase family.</text>
</comment>
<protein>
    <recommendedName>
        <fullName evidence="1">Enolase</fullName>
        <ecNumber evidence="1">4.2.1.11</ecNumber>
    </recommendedName>
    <alternativeName>
        <fullName evidence="1">2-phospho-D-glycerate hydro-lyase</fullName>
    </alternativeName>
    <alternativeName>
        <fullName evidence="1">2-phosphoglycerate dehydratase</fullName>
    </alternativeName>
</protein>
<feature type="chain" id="PRO_0000280835" description="Enolase">
    <location>
        <begin position="1"/>
        <end position="431"/>
    </location>
</feature>
<feature type="active site" description="Proton donor" evidence="1">
    <location>
        <position position="205"/>
    </location>
</feature>
<feature type="active site" description="Proton acceptor" evidence="1">
    <location>
        <position position="340"/>
    </location>
</feature>
<feature type="binding site" evidence="1">
    <location>
        <position position="163"/>
    </location>
    <ligand>
        <name>(2R)-2-phosphoglycerate</name>
        <dbReference type="ChEBI" id="CHEBI:58289"/>
    </ligand>
</feature>
<feature type="binding site" evidence="1">
    <location>
        <position position="242"/>
    </location>
    <ligand>
        <name>Mg(2+)</name>
        <dbReference type="ChEBI" id="CHEBI:18420"/>
    </ligand>
</feature>
<feature type="binding site" evidence="1">
    <location>
        <position position="288"/>
    </location>
    <ligand>
        <name>Mg(2+)</name>
        <dbReference type="ChEBI" id="CHEBI:18420"/>
    </ligand>
</feature>
<feature type="binding site" evidence="1">
    <location>
        <position position="315"/>
    </location>
    <ligand>
        <name>Mg(2+)</name>
        <dbReference type="ChEBI" id="CHEBI:18420"/>
    </ligand>
</feature>
<feature type="binding site" evidence="1">
    <location>
        <position position="340"/>
    </location>
    <ligand>
        <name>(2R)-2-phosphoglycerate</name>
        <dbReference type="ChEBI" id="CHEBI:58289"/>
    </ligand>
</feature>
<feature type="binding site" evidence="1">
    <location>
        <position position="369"/>
    </location>
    <ligand>
        <name>(2R)-2-phosphoglycerate</name>
        <dbReference type="ChEBI" id="CHEBI:58289"/>
    </ligand>
</feature>
<feature type="binding site" evidence="1">
    <location>
        <position position="370"/>
    </location>
    <ligand>
        <name>(2R)-2-phosphoglycerate</name>
        <dbReference type="ChEBI" id="CHEBI:58289"/>
    </ligand>
</feature>
<feature type="binding site" evidence="1">
    <location>
        <position position="391"/>
    </location>
    <ligand>
        <name>(2R)-2-phosphoglycerate</name>
        <dbReference type="ChEBI" id="CHEBI:58289"/>
    </ligand>
</feature>
<proteinExistence type="inferred from homology"/>
<organism>
    <name type="scientific">Bacillus thuringiensis (strain Al Hakam)</name>
    <dbReference type="NCBI Taxonomy" id="412694"/>
    <lineage>
        <taxon>Bacteria</taxon>
        <taxon>Bacillati</taxon>
        <taxon>Bacillota</taxon>
        <taxon>Bacilli</taxon>
        <taxon>Bacillales</taxon>
        <taxon>Bacillaceae</taxon>
        <taxon>Bacillus</taxon>
        <taxon>Bacillus cereus group</taxon>
    </lineage>
</organism>
<evidence type="ECO:0000255" key="1">
    <source>
        <dbReference type="HAMAP-Rule" id="MF_00318"/>
    </source>
</evidence>
<sequence>MSTIIDVYAREVLDSRGNPTVEVEVYTESGAFGRAIVPSGASTGEHEAVELRDGDKSRYLGKGVMNAVNNVNEAIAPEIVGFDVTDQAGIDRAMIELDGTPNKGKLGANAILGVSMAVAHAAADFVGLPLYRYLGGFNAKQLPTPMMNIINGGSHADNNVDFQEFMILPVGAPTFKESIRMGAEVFHALKAVLHDKGLNTAVGDEGGFAPNLGSNREALEVIIEAIEKAGYKAGENVFLGMDVASSEFYNKETGKYDLAGEGRTGLTSAEMVDFYEELCKDFPIISIEDGLDENDWDGHKLLTERIGDKVQLVGDDLFVTNTQKLAEGIEKGISNSILIKVNQIGTLTETFEAIEMAKRAGYTAVVSHRSGETEDATIADIAVATNAGQIKTGSMSRTDRIAKYNQLLRIEDELGEIAVYDGIKSFYNIKR</sequence>
<dbReference type="EC" id="4.2.1.11" evidence="1"/>
<dbReference type="EMBL" id="CP000485">
    <property type="protein sequence ID" value="ABK87816.1"/>
    <property type="molecule type" value="Genomic_DNA"/>
</dbReference>
<dbReference type="RefSeq" id="WP_000103949.1">
    <property type="nucleotide sequence ID" value="NC_008600.1"/>
</dbReference>
<dbReference type="SMR" id="A0RKS3"/>
<dbReference type="GeneID" id="83638809"/>
<dbReference type="KEGG" id="btl:BALH_4627"/>
<dbReference type="HOGENOM" id="CLU_031223_2_1_9"/>
<dbReference type="UniPathway" id="UPA00109">
    <property type="reaction ID" value="UER00187"/>
</dbReference>
<dbReference type="GO" id="GO:0009986">
    <property type="term" value="C:cell surface"/>
    <property type="evidence" value="ECO:0007669"/>
    <property type="project" value="UniProtKB-SubCell"/>
</dbReference>
<dbReference type="GO" id="GO:0005576">
    <property type="term" value="C:extracellular region"/>
    <property type="evidence" value="ECO:0007669"/>
    <property type="project" value="UniProtKB-SubCell"/>
</dbReference>
<dbReference type="GO" id="GO:0000015">
    <property type="term" value="C:phosphopyruvate hydratase complex"/>
    <property type="evidence" value="ECO:0007669"/>
    <property type="project" value="InterPro"/>
</dbReference>
<dbReference type="GO" id="GO:0000287">
    <property type="term" value="F:magnesium ion binding"/>
    <property type="evidence" value="ECO:0007669"/>
    <property type="project" value="UniProtKB-UniRule"/>
</dbReference>
<dbReference type="GO" id="GO:0004634">
    <property type="term" value="F:phosphopyruvate hydratase activity"/>
    <property type="evidence" value="ECO:0007669"/>
    <property type="project" value="UniProtKB-UniRule"/>
</dbReference>
<dbReference type="GO" id="GO:0006096">
    <property type="term" value="P:glycolytic process"/>
    <property type="evidence" value="ECO:0007669"/>
    <property type="project" value="UniProtKB-UniRule"/>
</dbReference>
<dbReference type="CDD" id="cd03313">
    <property type="entry name" value="enolase"/>
    <property type="match status" value="1"/>
</dbReference>
<dbReference type="FunFam" id="3.20.20.120:FF:000001">
    <property type="entry name" value="Enolase"/>
    <property type="match status" value="1"/>
</dbReference>
<dbReference type="FunFam" id="3.30.390.10:FF:000001">
    <property type="entry name" value="Enolase"/>
    <property type="match status" value="1"/>
</dbReference>
<dbReference type="Gene3D" id="3.20.20.120">
    <property type="entry name" value="Enolase-like C-terminal domain"/>
    <property type="match status" value="1"/>
</dbReference>
<dbReference type="Gene3D" id="3.30.390.10">
    <property type="entry name" value="Enolase-like, N-terminal domain"/>
    <property type="match status" value="1"/>
</dbReference>
<dbReference type="HAMAP" id="MF_00318">
    <property type="entry name" value="Enolase"/>
    <property type="match status" value="1"/>
</dbReference>
<dbReference type="InterPro" id="IPR000941">
    <property type="entry name" value="Enolase"/>
</dbReference>
<dbReference type="InterPro" id="IPR036849">
    <property type="entry name" value="Enolase-like_C_sf"/>
</dbReference>
<dbReference type="InterPro" id="IPR029017">
    <property type="entry name" value="Enolase-like_N"/>
</dbReference>
<dbReference type="InterPro" id="IPR020810">
    <property type="entry name" value="Enolase_C"/>
</dbReference>
<dbReference type="InterPro" id="IPR020809">
    <property type="entry name" value="Enolase_CS"/>
</dbReference>
<dbReference type="InterPro" id="IPR020811">
    <property type="entry name" value="Enolase_N"/>
</dbReference>
<dbReference type="NCBIfam" id="TIGR01060">
    <property type="entry name" value="eno"/>
    <property type="match status" value="1"/>
</dbReference>
<dbReference type="PANTHER" id="PTHR11902">
    <property type="entry name" value="ENOLASE"/>
    <property type="match status" value="1"/>
</dbReference>
<dbReference type="PANTHER" id="PTHR11902:SF1">
    <property type="entry name" value="ENOLASE"/>
    <property type="match status" value="1"/>
</dbReference>
<dbReference type="Pfam" id="PF00113">
    <property type="entry name" value="Enolase_C"/>
    <property type="match status" value="1"/>
</dbReference>
<dbReference type="Pfam" id="PF03952">
    <property type="entry name" value="Enolase_N"/>
    <property type="match status" value="1"/>
</dbReference>
<dbReference type="PIRSF" id="PIRSF001400">
    <property type="entry name" value="Enolase"/>
    <property type="match status" value="1"/>
</dbReference>
<dbReference type="PRINTS" id="PR00148">
    <property type="entry name" value="ENOLASE"/>
</dbReference>
<dbReference type="SFLD" id="SFLDS00001">
    <property type="entry name" value="Enolase"/>
    <property type="match status" value="1"/>
</dbReference>
<dbReference type="SFLD" id="SFLDF00002">
    <property type="entry name" value="enolase"/>
    <property type="match status" value="1"/>
</dbReference>
<dbReference type="SMART" id="SM01192">
    <property type="entry name" value="Enolase_C"/>
    <property type="match status" value="1"/>
</dbReference>
<dbReference type="SMART" id="SM01193">
    <property type="entry name" value="Enolase_N"/>
    <property type="match status" value="1"/>
</dbReference>
<dbReference type="SUPFAM" id="SSF51604">
    <property type="entry name" value="Enolase C-terminal domain-like"/>
    <property type="match status" value="1"/>
</dbReference>
<dbReference type="SUPFAM" id="SSF54826">
    <property type="entry name" value="Enolase N-terminal domain-like"/>
    <property type="match status" value="1"/>
</dbReference>
<dbReference type="PROSITE" id="PS00164">
    <property type="entry name" value="ENOLASE"/>
    <property type="match status" value="1"/>
</dbReference>